<dbReference type="EC" id="2.4.1.227" evidence="1"/>
<dbReference type="EMBL" id="BA000018">
    <property type="protein sequence ID" value="BAB42511.1"/>
    <property type="molecule type" value="Genomic_DNA"/>
</dbReference>
<dbReference type="PIR" id="B89919">
    <property type="entry name" value="B89919"/>
</dbReference>
<dbReference type="RefSeq" id="WP_000160906.1">
    <property type="nucleotide sequence ID" value="NC_002745.2"/>
</dbReference>
<dbReference type="SMR" id="P65482"/>
<dbReference type="CAZy" id="GT28">
    <property type="family name" value="Glycosyltransferase Family 28"/>
</dbReference>
<dbReference type="EnsemblBacteria" id="BAB42511">
    <property type="protein sequence ID" value="BAB42511"/>
    <property type="gene ID" value="BAB42511"/>
</dbReference>
<dbReference type="KEGG" id="sau:SA1251"/>
<dbReference type="HOGENOM" id="CLU_037404_0_0_9"/>
<dbReference type="UniPathway" id="UPA00219"/>
<dbReference type="GO" id="GO:0005886">
    <property type="term" value="C:plasma membrane"/>
    <property type="evidence" value="ECO:0007669"/>
    <property type="project" value="UniProtKB-SubCell"/>
</dbReference>
<dbReference type="GO" id="GO:0050511">
    <property type="term" value="F:undecaprenyldiphospho-muramoylpentapeptide beta-N-acetylglucosaminyltransferase activity"/>
    <property type="evidence" value="ECO:0007669"/>
    <property type="project" value="UniProtKB-UniRule"/>
</dbReference>
<dbReference type="GO" id="GO:0005975">
    <property type="term" value="P:carbohydrate metabolic process"/>
    <property type="evidence" value="ECO:0007669"/>
    <property type="project" value="InterPro"/>
</dbReference>
<dbReference type="GO" id="GO:0051301">
    <property type="term" value="P:cell division"/>
    <property type="evidence" value="ECO:0007669"/>
    <property type="project" value="UniProtKB-KW"/>
</dbReference>
<dbReference type="GO" id="GO:0071555">
    <property type="term" value="P:cell wall organization"/>
    <property type="evidence" value="ECO:0007669"/>
    <property type="project" value="UniProtKB-KW"/>
</dbReference>
<dbReference type="GO" id="GO:0030259">
    <property type="term" value="P:lipid glycosylation"/>
    <property type="evidence" value="ECO:0007669"/>
    <property type="project" value="UniProtKB-UniRule"/>
</dbReference>
<dbReference type="GO" id="GO:0009252">
    <property type="term" value="P:peptidoglycan biosynthetic process"/>
    <property type="evidence" value="ECO:0007669"/>
    <property type="project" value="UniProtKB-UniRule"/>
</dbReference>
<dbReference type="GO" id="GO:0008360">
    <property type="term" value="P:regulation of cell shape"/>
    <property type="evidence" value="ECO:0007669"/>
    <property type="project" value="UniProtKB-KW"/>
</dbReference>
<dbReference type="CDD" id="cd03785">
    <property type="entry name" value="GT28_MurG"/>
    <property type="match status" value="1"/>
</dbReference>
<dbReference type="Gene3D" id="3.40.50.2000">
    <property type="entry name" value="Glycogen Phosphorylase B"/>
    <property type="match status" value="2"/>
</dbReference>
<dbReference type="HAMAP" id="MF_00033">
    <property type="entry name" value="MurG"/>
    <property type="match status" value="1"/>
</dbReference>
<dbReference type="InterPro" id="IPR006009">
    <property type="entry name" value="GlcNAc_MurG"/>
</dbReference>
<dbReference type="InterPro" id="IPR007235">
    <property type="entry name" value="Glyco_trans_28_C"/>
</dbReference>
<dbReference type="InterPro" id="IPR004276">
    <property type="entry name" value="GlycoTrans_28_N"/>
</dbReference>
<dbReference type="NCBIfam" id="NF009102">
    <property type="entry name" value="PRK12446.1"/>
    <property type="match status" value="1"/>
</dbReference>
<dbReference type="PANTHER" id="PTHR21015:SF27">
    <property type="entry name" value="UDP-N-ACETYLGLUCOSAMINE--N-ACETYLMURAMYL-(PENTAPEPTIDE) PYROPHOSPHORYL-UNDECAPRENOL N-ACETYLGLUCOSAMINE TRANSFERASE"/>
    <property type="match status" value="1"/>
</dbReference>
<dbReference type="PANTHER" id="PTHR21015">
    <property type="entry name" value="UDP-N-ACETYLGLUCOSAMINE--N-ACETYLMURAMYL-(PENTAPEPTIDE) PYROPHOSPHORYL-UNDECAPRENOL N-ACETYLGLUCOSAMINE TRANSFERASE 1"/>
    <property type="match status" value="1"/>
</dbReference>
<dbReference type="Pfam" id="PF04101">
    <property type="entry name" value="Glyco_tran_28_C"/>
    <property type="match status" value="1"/>
</dbReference>
<dbReference type="Pfam" id="PF03033">
    <property type="entry name" value="Glyco_transf_28"/>
    <property type="match status" value="1"/>
</dbReference>
<dbReference type="SUPFAM" id="SSF53756">
    <property type="entry name" value="UDP-Glycosyltransferase/glycogen phosphorylase"/>
    <property type="match status" value="1"/>
</dbReference>
<evidence type="ECO:0000255" key="1">
    <source>
        <dbReference type="HAMAP-Rule" id="MF_00033"/>
    </source>
</evidence>
<reference key="1">
    <citation type="journal article" date="2001" name="Lancet">
        <title>Whole genome sequencing of meticillin-resistant Staphylococcus aureus.</title>
        <authorList>
            <person name="Kuroda M."/>
            <person name="Ohta T."/>
            <person name="Uchiyama I."/>
            <person name="Baba T."/>
            <person name="Yuzawa H."/>
            <person name="Kobayashi I."/>
            <person name="Cui L."/>
            <person name="Oguchi A."/>
            <person name="Aoki K."/>
            <person name="Nagai Y."/>
            <person name="Lian J.-Q."/>
            <person name="Ito T."/>
            <person name="Kanamori M."/>
            <person name="Matsumaru H."/>
            <person name="Maruyama A."/>
            <person name="Murakami H."/>
            <person name="Hosoyama A."/>
            <person name="Mizutani-Ui Y."/>
            <person name="Takahashi N.K."/>
            <person name="Sawano T."/>
            <person name="Inoue R."/>
            <person name="Kaito C."/>
            <person name="Sekimizu K."/>
            <person name="Hirakawa H."/>
            <person name="Kuhara S."/>
            <person name="Goto S."/>
            <person name="Yabuzaki J."/>
            <person name="Kanehisa M."/>
            <person name="Yamashita A."/>
            <person name="Oshima K."/>
            <person name="Furuya K."/>
            <person name="Yoshino C."/>
            <person name="Shiba T."/>
            <person name="Hattori M."/>
            <person name="Ogasawara N."/>
            <person name="Hayashi H."/>
            <person name="Hiramatsu K."/>
        </authorList>
    </citation>
    <scope>NUCLEOTIDE SEQUENCE [LARGE SCALE GENOMIC DNA]</scope>
    <source>
        <strain>N315</strain>
    </source>
</reference>
<reference key="2">
    <citation type="submission" date="2007-10" db="UniProtKB">
        <title>Shotgun proteomic analysis of total and membrane protein extracts of S. aureus strain N315.</title>
        <authorList>
            <person name="Vaezzadeh A.R."/>
            <person name="Deshusses J."/>
            <person name="Lescuyer P."/>
            <person name="Hochstrasser D.F."/>
        </authorList>
    </citation>
    <scope>IDENTIFICATION BY MASS SPECTROMETRY [LARGE SCALE ANALYSIS]</scope>
    <source>
        <strain>N315</strain>
    </source>
</reference>
<sequence>MTKIAFTGGGTVGHVSVNLSLIPTALSQGYEALYIGSKNGIEREMIESQLPEIKYYPISSGKLRRYISLENAKDVFKVLKGILDARKVLKKEKPDLLFSKGGFVSVPVVIAAKSLNIPTIIHESDLTPGLANKIALKFAKKIYTTFEETLNYLPKEKADFIGATIREDLKNGNAHNGYQLTGFNENKKVLLVMGGSLGSKKLNSIIRENLDALLQQYQVIHLTGKGLKDAQVKKSGYIQYEFVKEDLTDLLAITDTVISRAGSNAIYEFLTLRIPMLLVPLGLDQSRGDQIDNANHFADKGYAKTIDEEQLTAQILLQELNEMEQERTRIINNMKSYEQSYTKEALFDKMIKDALN</sequence>
<accession>P65482</accession>
<accession>Q99U69</accession>
<organism>
    <name type="scientific">Staphylococcus aureus (strain N315)</name>
    <dbReference type="NCBI Taxonomy" id="158879"/>
    <lineage>
        <taxon>Bacteria</taxon>
        <taxon>Bacillati</taxon>
        <taxon>Bacillota</taxon>
        <taxon>Bacilli</taxon>
        <taxon>Bacillales</taxon>
        <taxon>Staphylococcaceae</taxon>
        <taxon>Staphylococcus</taxon>
    </lineage>
</organism>
<proteinExistence type="evidence at protein level"/>
<gene>
    <name evidence="1" type="primary">murG</name>
    <name type="ordered locus">SA1251</name>
</gene>
<protein>
    <recommendedName>
        <fullName evidence="1">UDP-N-acetylglucosamine--N-acetylmuramyl-(pentapeptide) pyrophosphoryl-undecaprenol N-acetylglucosamine transferase</fullName>
        <ecNumber evidence="1">2.4.1.227</ecNumber>
    </recommendedName>
    <alternativeName>
        <fullName evidence="1">Undecaprenyl-PP-MurNAc-pentapeptide-UDPGlcNAc GlcNAc transferase</fullName>
    </alternativeName>
</protein>
<keyword id="KW-0131">Cell cycle</keyword>
<keyword id="KW-0132">Cell division</keyword>
<keyword id="KW-1003">Cell membrane</keyword>
<keyword id="KW-0133">Cell shape</keyword>
<keyword id="KW-0961">Cell wall biogenesis/degradation</keyword>
<keyword id="KW-0328">Glycosyltransferase</keyword>
<keyword id="KW-0472">Membrane</keyword>
<keyword id="KW-0573">Peptidoglycan synthesis</keyword>
<keyword id="KW-0808">Transferase</keyword>
<comment type="function">
    <text evidence="1">Cell wall formation. Catalyzes the transfer of a GlcNAc subunit on undecaprenyl-pyrophosphoryl-MurNAc-pentapeptide (lipid intermediate I) to form undecaprenyl-pyrophosphoryl-MurNAc-(pentapeptide)GlcNAc (lipid intermediate II).</text>
</comment>
<comment type="catalytic activity">
    <reaction evidence="1">
        <text>Mur2Ac(oyl-L-Ala-gamma-D-Glu-L-Lys-D-Ala-D-Ala)-di-trans,octa-cis-undecaprenyl diphosphate + UDP-N-acetyl-alpha-D-glucosamine = beta-D-GlcNAc-(1-&gt;4)-Mur2Ac(oyl-L-Ala-gamma-D-Glu-L-Lys-D-Ala-D-Ala)-di-trans,octa-cis-undecaprenyl diphosphate + UDP + H(+)</text>
        <dbReference type="Rhea" id="RHEA:23192"/>
        <dbReference type="ChEBI" id="CHEBI:15378"/>
        <dbReference type="ChEBI" id="CHEBI:57705"/>
        <dbReference type="ChEBI" id="CHEBI:58223"/>
        <dbReference type="ChEBI" id="CHEBI:60032"/>
        <dbReference type="ChEBI" id="CHEBI:60033"/>
        <dbReference type="EC" id="2.4.1.227"/>
    </reaction>
</comment>
<comment type="pathway">
    <text evidence="1">Cell wall biogenesis; peptidoglycan biosynthesis.</text>
</comment>
<comment type="subcellular location">
    <subcellularLocation>
        <location evidence="1">Cell membrane</location>
        <topology evidence="1">Peripheral membrane protein</topology>
        <orientation evidence="1">Cytoplasmic side</orientation>
    </subcellularLocation>
</comment>
<comment type="similarity">
    <text evidence="1">Belongs to the glycosyltransferase 28 family. MurG subfamily.</text>
</comment>
<name>MURG_STAAN</name>
<feature type="chain" id="PRO_0000109212" description="UDP-N-acetylglucosamine--N-acetylmuramyl-(pentapeptide) pyrophosphoryl-undecaprenol N-acetylglucosamine transferase">
    <location>
        <begin position="1"/>
        <end position="356"/>
    </location>
</feature>
<feature type="binding site" evidence="1">
    <location>
        <position position="166"/>
    </location>
    <ligand>
        <name>UDP-N-acetyl-alpha-D-glucosamine</name>
        <dbReference type="ChEBI" id="CHEBI:57705"/>
    </ligand>
</feature>
<feature type="binding site" evidence="1">
    <location>
        <position position="196"/>
    </location>
    <ligand>
        <name>UDP-N-acetyl-alpha-D-glucosamine</name>
        <dbReference type="ChEBI" id="CHEBI:57705"/>
    </ligand>
</feature>
<feature type="binding site" evidence="1">
    <location>
        <position position="290"/>
    </location>
    <ligand>
        <name>UDP-N-acetyl-alpha-D-glucosamine</name>
        <dbReference type="ChEBI" id="CHEBI:57705"/>
    </ligand>
</feature>